<protein>
    <recommendedName>
        <fullName evidence="1">Fructose-1,6-bisphosphatase class 1</fullName>
        <shortName evidence="1">FBPase class 1</shortName>
        <ecNumber evidence="1">3.1.3.11</ecNumber>
    </recommendedName>
    <alternativeName>
        <fullName evidence="1">D-fructose-1,6-bisphosphate 1-phosphohydrolase class 1</fullName>
    </alternativeName>
</protein>
<keyword id="KW-0119">Carbohydrate metabolism</keyword>
<keyword id="KW-0963">Cytoplasm</keyword>
<keyword id="KW-0378">Hydrolase</keyword>
<keyword id="KW-0460">Magnesium</keyword>
<keyword id="KW-0479">Metal-binding</keyword>
<organism>
    <name type="scientific">Pseudomonas fluorescens (strain Pf0-1)</name>
    <dbReference type="NCBI Taxonomy" id="205922"/>
    <lineage>
        <taxon>Bacteria</taxon>
        <taxon>Pseudomonadati</taxon>
        <taxon>Pseudomonadota</taxon>
        <taxon>Gammaproteobacteria</taxon>
        <taxon>Pseudomonadales</taxon>
        <taxon>Pseudomonadaceae</taxon>
        <taxon>Pseudomonas</taxon>
    </lineage>
</organism>
<feature type="chain" id="PRO_0000364645" description="Fructose-1,6-bisphosphatase class 1">
    <location>
        <begin position="1"/>
        <end position="336"/>
    </location>
</feature>
<feature type="binding site" evidence="1">
    <location>
        <position position="90"/>
    </location>
    <ligand>
        <name>Mg(2+)</name>
        <dbReference type="ChEBI" id="CHEBI:18420"/>
        <label>1</label>
    </ligand>
</feature>
<feature type="binding site" evidence="1">
    <location>
        <position position="112"/>
    </location>
    <ligand>
        <name>Mg(2+)</name>
        <dbReference type="ChEBI" id="CHEBI:18420"/>
        <label>1</label>
    </ligand>
</feature>
<feature type="binding site" evidence="1">
    <location>
        <position position="112"/>
    </location>
    <ligand>
        <name>Mg(2+)</name>
        <dbReference type="ChEBI" id="CHEBI:18420"/>
        <label>2</label>
    </ligand>
</feature>
<feature type="binding site" evidence="1">
    <location>
        <position position="114"/>
    </location>
    <ligand>
        <name>Mg(2+)</name>
        <dbReference type="ChEBI" id="CHEBI:18420"/>
        <label>1</label>
    </ligand>
</feature>
<feature type="binding site" evidence="1">
    <location>
        <begin position="115"/>
        <end position="118"/>
    </location>
    <ligand>
        <name>substrate</name>
    </ligand>
</feature>
<feature type="binding site" evidence="1">
    <location>
        <position position="115"/>
    </location>
    <ligand>
        <name>Mg(2+)</name>
        <dbReference type="ChEBI" id="CHEBI:18420"/>
        <label>2</label>
    </ligand>
</feature>
<feature type="binding site" evidence="1">
    <location>
        <position position="211"/>
    </location>
    <ligand>
        <name>substrate</name>
    </ligand>
</feature>
<feature type="binding site" evidence="1">
    <location>
        <position position="277"/>
    </location>
    <ligand>
        <name>substrate</name>
    </ligand>
</feature>
<feature type="binding site" evidence="1">
    <location>
        <position position="283"/>
    </location>
    <ligand>
        <name>Mg(2+)</name>
        <dbReference type="ChEBI" id="CHEBI:18420"/>
        <label>2</label>
    </ligand>
</feature>
<name>F16PA_PSEPF</name>
<gene>
    <name evidence="1" type="primary">fbp</name>
    <name type="ordered locus">Pfl01_0352</name>
</gene>
<proteinExistence type="inferred from homology"/>
<comment type="catalytic activity">
    <reaction evidence="1">
        <text>beta-D-fructose 1,6-bisphosphate + H2O = beta-D-fructose 6-phosphate + phosphate</text>
        <dbReference type="Rhea" id="RHEA:11064"/>
        <dbReference type="ChEBI" id="CHEBI:15377"/>
        <dbReference type="ChEBI" id="CHEBI:32966"/>
        <dbReference type="ChEBI" id="CHEBI:43474"/>
        <dbReference type="ChEBI" id="CHEBI:57634"/>
        <dbReference type="EC" id="3.1.3.11"/>
    </reaction>
</comment>
<comment type="cofactor">
    <cofactor evidence="1">
        <name>Mg(2+)</name>
        <dbReference type="ChEBI" id="CHEBI:18420"/>
    </cofactor>
    <text evidence="1">Binds 2 magnesium ions per subunit.</text>
</comment>
<comment type="pathway">
    <text evidence="1">Carbohydrate biosynthesis; gluconeogenesis.</text>
</comment>
<comment type="subunit">
    <text evidence="1">Homotetramer.</text>
</comment>
<comment type="subcellular location">
    <subcellularLocation>
        <location evidence="1">Cytoplasm</location>
    </subcellularLocation>
</comment>
<comment type="similarity">
    <text evidence="1">Belongs to the FBPase class 1 family.</text>
</comment>
<accession>Q3KJG0</accession>
<dbReference type="EC" id="3.1.3.11" evidence="1"/>
<dbReference type="EMBL" id="CP000094">
    <property type="protein sequence ID" value="ABA72096.1"/>
    <property type="molecule type" value="Genomic_DNA"/>
</dbReference>
<dbReference type="RefSeq" id="WP_007952492.1">
    <property type="nucleotide sequence ID" value="NC_007492.2"/>
</dbReference>
<dbReference type="SMR" id="Q3KJG0"/>
<dbReference type="KEGG" id="pfo:Pfl01_0352"/>
<dbReference type="eggNOG" id="COG0158">
    <property type="taxonomic scope" value="Bacteria"/>
</dbReference>
<dbReference type="HOGENOM" id="CLU_039977_0_0_6"/>
<dbReference type="UniPathway" id="UPA00138"/>
<dbReference type="Proteomes" id="UP000002704">
    <property type="component" value="Chromosome"/>
</dbReference>
<dbReference type="GO" id="GO:0005829">
    <property type="term" value="C:cytosol"/>
    <property type="evidence" value="ECO:0007669"/>
    <property type="project" value="TreeGrafter"/>
</dbReference>
<dbReference type="GO" id="GO:0042132">
    <property type="term" value="F:fructose 1,6-bisphosphate 1-phosphatase activity"/>
    <property type="evidence" value="ECO:0007669"/>
    <property type="project" value="UniProtKB-UniRule"/>
</dbReference>
<dbReference type="GO" id="GO:0000287">
    <property type="term" value="F:magnesium ion binding"/>
    <property type="evidence" value="ECO:0007669"/>
    <property type="project" value="UniProtKB-UniRule"/>
</dbReference>
<dbReference type="GO" id="GO:0030388">
    <property type="term" value="P:fructose 1,6-bisphosphate metabolic process"/>
    <property type="evidence" value="ECO:0007669"/>
    <property type="project" value="TreeGrafter"/>
</dbReference>
<dbReference type="GO" id="GO:0006002">
    <property type="term" value="P:fructose 6-phosphate metabolic process"/>
    <property type="evidence" value="ECO:0007669"/>
    <property type="project" value="TreeGrafter"/>
</dbReference>
<dbReference type="GO" id="GO:0006000">
    <property type="term" value="P:fructose metabolic process"/>
    <property type="evidence" value="ECO:0007669"/>
    <property type="project" value="TreeGrafter"/>
</dbReference>
<dbReference type="GO" id="GO:0006094">
    <property type="term" value="P:gluconeogenesis"/>
    <property type="evidence" value="ECO:0007669"/>
    <property type="project" value="UniProtKB-UniRule"/>
</dbReference>
<dbReference type="GO" id="GO:0005986">
    <property type="term" value="P:sucrose biosynthetic process"/>
    <property type="evidence" value="ECO:0007669"/>
    <property type="project" value="TreeGrafter"/>
</dbReference>
<dbReference type="CDD" id="cd00354">
    <property type="entry name" value="FBPase"/>
    <property type="match status" value="1"/>
</dbReference>
<dbReference type="FunFam" id="3.30.540.10:FF:000006">
    <property type="entry name" value="Fructose-1,6-bisphosphatase class 1"/>
    <property type="match status" value="1"/>
</dbReference>
<dbReference type="FunFam" id="3.40.190.80:FF:000011">
    <property type="entry name" value="Fructose-1,6-bisphosphatase class 1"/>
    <property type="match status" value="1"/>
</dbReference>
<dbReference type="Gene3D" id="3.40.190.80">
    <property type="match status" value="1"/>
</dbReference>
<dbReference type="Gene3D" id="3.30.540.10">
    <property type="entry name" value="Fructose-1,6-Bisphosphatase, subunit A, domain 1"/>
    <property type="match status" value="1"/>
</dbReference>
<dbReference type="HAMAP" id="MF_01855">
    <property type="entry name" value="FBPase_class1"/>
    <property type="match status" value="1"/>
</dbReference>
<dbReference type="InterPro" id="IPR044015">
    <property type="entry name" value="FBPase_C_dom"/>
</dbReference>
<dbReference type="InterPro" id="IPR000146">
    <property type="entry name" value="FBPase_class-1"/>
</dbReference>
<dbReference type="InterPro" id="IPR033391">
    <property type="entry name" value="FBPase_N"/>
</dbReference>
<dbReference type="InterPro" id="IPR028343">
    <property type="entry name" value="FBPtase"/>
</dbReference>
<dbReference type="NCBIfam" id="NF006778">
    <property type="entry name" value="PRK09293.1-1"/>
    <property type="match status" value="1"/>
</dbReference>
<dbReference type="NCBIfam" id="NF006779">
    <property type="entry name" value="PRK09293.1-3"/>
    <property type="match status" value="1"/>
</dbReference>
<dbReference type="NCBIfam" id="NF006780">
    <property type="entry name" value="PRK09293.1-4"/>
    <property type="match status" value="1"/>
</dbReference>
<dbReference type="PANTHER" id="PTHR11556">
    <property type="entry name" value="FRUCTOSE-1,6-BISPHOSPHATASE-RELATED"/>
    <property type="match status" value="1"/>
</dbReference>
<dbReference type="PANTHER" id="PTHR11556:SF35">
    <property type="entry name" value="SEDOHEPTULOSE-1,7-BISPHOSPHATASE, CHLOROPLASTIC"/>
    <property type="match status" value="1"/>
</dbReference>
<dbReference type="Pfam" id="PF00316">
    <property type="entry name" value="FBPase"/>
    <property type="match status" value="1"/>
</dbReference>
<dbReference type="Pfam" id="PF18913">
    <property type="entry name" value="FBPase_C"/>
    <property type="match status" value="1"/>
</dbReference>
<dbReference type="PIRSF" id="PIRSF500210">
    <property type="entry name" value="FBPtase"/>
    <property type="match status" value="1"/>
</dbReference>
<dbReference type="PIRSF" id="PIRSF000904">
    <property type="entry name" value="FBPtase_SBPase"/>
    <property type="match status" value="1"/>
</dbReference>
<dbReference type="PRINTS" id="PR00115">
    <property type="entry name" value="F16BPHPHTASE"/>
</dbReference>
<dbReference type="SUPFAM" id="SSF56655">
    <property type="entry name" value="Carbohydrate phosphatase"/>
    <property type="match status" value="1"/>
</dbReference>
<sequence>MSRVTLSRYLIEQTRSNNTPADLRFLIEVVARACKEISHAVSKGALGGVLGSMGTENVQGEVQKKLDVLSNEILLEANEWGGHLAGMASEEMDNAYQIPGKYPKGAYLLVFDPLDGSSNIDINAPVGTIFSVLRCPNEYLSQNEALDEKAFLQPGTQQVAAGYAIYGPQTMLVLTLGHGVKGFTLDREMGSFVLTHEDITIPESTQEFAINMSNQRHWEAPVQRYVSELLAGEEGPLKKNYNMRWVAAMVADVHRILTRGGLFMYPRDSREPSKPGKLRLMYEANPMSFLVEQAGGASTDGHQRILDIKPEGLHQRVAVFLGSKEEVARATAYHKE</sequence>
<reference key="1">
    <citation type="journal article" date="2009" name="Genome Biol.">
        <title>Genomic and genetic analyses of diversity and plant interactions of Pseudomonas fluorescens.</title>
        <authorList>
            <person name="Silby M.W."/>
            <person name="Cerdeno-Tarraga A.M."/>
            <person name="Vernikos G.S."/>
            <person name="Giddens S.R."/>
            <person name="Jackson R.W."/>
            <person name="Preston G.M."/>
            <person name="Zhang X.-X."/>
            <person name="Moon C.D."/>
            <person name="Gehrig S.M."/>
            <person name="Godfrey S.A.C."/>
            <person name="Knight C.G."/>
            <person name="Malone J.G."/>
            <person name="Robinson Z."/>
            <person name="Spiers A.J."/>
            <person name="Harris S."/>
            <person name="Challis G.L."/>
            <person name="Yaxley A.M."/>
            <person name="Harris D."/>
            <person name="Seeger K."/>
            <person name="Murphy L."/>
            <person name="Rutter S."/>
            <person name="Squares R."/>
            <person name="Quail M.A."/>
            <person name="Saunders E."/>
            <person name="Mavromatis K."/>
            <person name="Brettin T.S."/>
            <person name="Bentley S.D."/>
            <person name="Hothersall J."/>
            <person name="Stephens E."/>
            <person name="Thomas C.M."/>
            <person name="Parkhill J."/>
            <person name="Levy S.B."/>
            <person name="Rainey P.B."/>
            <person name="Thomson N.R."/>
        </authorList>
    </citation>
    <scope>NUCLEOTIDE SEQUENCE [LARGE SCALE GENOMIC DNA]</scope>
    <source>
        <strain>Pf0-1</strain>
    </source>
</reference>
<evidence type="ECO:0000255" key="1">
    <source>
        <dbReference type="HAMAP-Rule" id="MF_01855"/>
    </source>
</evidence>